<keyword id="KW-0997">Cell inner membrane</keyword>
<keyword id="KW-1003">Cell membrane</keyword>
<keyword id="KW-0472">Membrane</keyword>
<comment type="function">
    <text evidence="1">Could be involved in insertion of integral membrane proteins into the membrane.</text>
</comment>
<comment type="subcellular location">
    <subcellularLocation>
        <location evidence="1">Cell inner membrane</location>
        <topology evidence="1">Peripheral membrane protein</topology>
        <orientation evidence="1">Cytoplasmic side</orientation>
    </subcellularLocation>
</comment>
<comment type="similarity">
    <text evidence="1">Belongs to the UPF0161 family.</text>
</comment>
<feature type="chain" id="PRO_1000013142" description="Putative membrane protein insertion efficiency factor">
    <location>
        <begin position="1"/>
        <end position="85"/>
    </location>
</feature>
<feature type="region of interest" description="Disordered" evidence="2">
    <location>
        <begin position="66"/>
        <end position="85"/>
    </location>
</feature>
<name>YIDD_YERPA</name>
<evidence type="ECO:0000255" key="1">
    <source>
        <dbReference type="HAMAP-Rule" id="MF_00386"/>
    </source>
</evidence>
<evidence type="ECO:0000256" key="2">
    <source>
        <dbReference type="SAM" id="MobiDB-lite"/>
    </source>
</evidence>
<accession>Q1C0B5</accession>
<reference key="1">
    <citation type="journal article" date="2006" name="J. Bacteriol.">
        <title>Complete genome sequence of Yersinia pestis strains Antiqua and Nepal516: evidence of gene reduction in an emerging pathogen.</title>
        <authorList>
            <person name="Chain P.S.G."/>
            <person name="Hu P."/>
            <person name="Malfatti S.A."/>
            <person name="Radnedge L."/>
            <person name="Larimer F."/>
            <person name="Vergez L.M."/>
            <person name="Worsham P."/>
            <person name="Chu M.C."/>
            <person name="Andersen G.L."/>
        </authorList>
    </citation>
    <scope>NUCLEOTIDE SEQUENCE [LARGE SCALE GENOMIC DNA]</scope>
    <source>
        <strain>Antiqua</strain>
    </source>
</reference>
<dbReference type="EMBL" id="CP000308">
    <property type="protein sequence ID" value="ABG16107.1"/>
    <property type="molecule type" value="Genomic_DNA"/>
</dbReference>
<dbReference type="KEGG" id="ypa:YPA_4146"/>
<dbReference type="Proteomes" id="UP000001971">
    <property type="component" value="Chromosome"/>
</dbReference>
<dbReference type="GO" id="GO:0005886">
    <property type="term" value="C:plasma membrane"/>
    <property type="evidence" value="ECO:0007669"/>
    <property type="project" value="UniProtKB-SubCell"/>
</dbReference>
<dbReference type="HAMAP" id="MF_00386">
    <property type="entry name" value="UPF0161_YidD"/>
    <property type="match status" value="1"/>
</dbReference>
<dbReference type="InterPro" id="IPR002696">
    <property type="entry name" value="Membr_insert_effic_factor_YidD"/>
</dbReference>
<dbReference type="NCBIfam" id="TIGR00278">
    <property type="entry name" value="membrane protein insertion efficiency factor YidD"/>
    <property type="match status" value="1"/>
</dbReference>
<dbReference type="PANTHER" id="PTHR33383">
    <property type="entry name" value="MEMBRANE PROTEIN INSERTION EFFICIENCY FACTOR-RELATED"/>
    <property type="match status" value="1"/>
</dbReference>
<dbReference type="PANTHER" id="PTHR33383:SF1">
    <property type="entry name" value="MEMBRANE PROTEIN INSERTION EFFICIENCY FACTOR-RELATED"/>
    <property type="match status" value="1"/>
</dbReference>
<dbReference type="Pfam" id="PF01809">
    <property type="entry name" value="YidD"/>
    <property type="match status" value="1"/>
</dbReference>
<dbReference type="SMART" id="SM01234">
    <property type="entry name" value="Haemolytic"/>
    <property type="match status" value="1"/>
</dbReference>
<organism>
    <name type="scientific">Yersinia pestis bv. Antiqua (strain Antiqua)</name>
    <dbReference type="NCBI Taxonomy" id="360102"/>
    <lineage>
        <taxon>Bacteria</taxon>
        <taxon>Pseudomonadati</taxon>
        <taxon>Pseudomonadota</taxon>
        <taxon>Gammaproteobacteria</taxon>
        <taxon>Enterobacterales</taxon>
        <taxon>Yersiniaceae</taxon>
        <taxon>Yersinia</taxon>
    </lineage>
</organism>
<sequence length="85" mass="9458">MASPLSPGSRILIGLIRGYQLVISPLLGPRCRFHPTCSHYGIEALRRFGMIKGSWLTLKRVLKCHPLNSGGDDPVPPKLDDNREH</sequence>
<proteinExistence type="inferred from homology"/>
<gene>
    <name type="ordered locus">YPA_4146</name>
</gene>
<protein>
    <recommendedName>
        <fullName evidence="1">Putative membrane protein insertion efficiency factor</fullName>
    </recommendedName>
</protein>